<accession>O07630</accession>
<name>YLAF_BACSU</name>
<comment type="subcellular location">
    <subcellularLocation>
        <location evidence="2">Cell membrane</location>
        <topology evidence="2">Multi-pass membrane protein</topology>
    </subcellularLocation>
</comment>
<feature type="chain" id="PRO_0000049622" description="Uncharacterized protein YlaF">
    <location>
        <begin position="1"/>
        <end position="62"/>
    </location>
</feature>
<feature type="transmembrane region" description="Helical" evidence="1">
    <location>
        <begin position="7"/>
        <end position="27"/>
    </location>
</feature>
<feature type="transmembrane region" description="Helical" evidence="1">
    <location>
        <begin position="34"/>
        <end position="51"/>
    </location>
</feature>
<reference key="1">
    <citation type="submission" date="1997-06" db="EMBL/GenBank/DDBJ databases">
        <title>Bacillus subtilis chromosomal region downstream nprE.</title>
        <authorList>
            <person name="Purnelle B."/>
            <person name="Presecan E."/>
            <person name="Glaser P."/>
            <person name="Richou A."/>
            <person name="Danchin A."/>
            <person name="Goffeau A."/>
        </authorList>
    </citation>
    <scope>NUCLEOTIDE SEQUENCE [GENOMIC DNA]</scope>
    <source>
        <strain>168</strain>
    </source>
</reference>
<reference key="2">
    <citation type="journal article" date="1997" name="Nature">
        <title>The complete genome sequence of the Gram-positive bacterium Bacillus subtilis.</title>
        <authorList>
            <person name="Kunst F."/>
            <person name="Ogasawara N."/>
            <person name="Moszer I."/>
            <person name="Albertini A.M."/>
            <person name="Alloni G."/>
            <person name="Azevedo V."/>
            <person name="Bertero M.G."/>
            <person name="Bessieres P."/>
            <person name="Bolotin A."/>
            <person name="Borchert S."/>
            <person name="Borriss R."/>
            <person name="Boursier L."/>
            <person name="Brans A."/>
            <person name="Braun M."/>
            <person name="Brignell S.C."/>
            <person name="Bron S."/>
            <person name="Brouillet S."/>
            <person name="Bruschi C.V."/>
            <person name="Caldwell B."/>
            <person name="Capuano V."/>
            <person name="Carter N.M."/>
            <person name="Choi S.-K."/>
            <person name="Codani J.-J."/>
            <person name="Connerton I.F."/>
            <person name="Cummings N.J."/>
            <person name="Daniel R.A."/>
            <person name="Denizot F."/>
            <person name="Devine K.M."/>
            <person name="Duesterhoeft A."/>
            <person name="Ehrlich S.D."/>
            <person name="Emmerson P.T."/>
            <person name="Entian K.-D."/>
            <person name="Errington J."/>
            <person name="Fabret C."/>
            <person name="Ferrari E."/>
            <person name="Foulger D."/>
            <person name="Fritz C."/>
            <person name="Fujita M."/>
            <person name="Fujita Y."/>
            <person name="Fuma S."/>
            <person name="Galizzi A."/>
            <person name="Galleron N."/>
            <person name="Ghim S.-Y."/>
            <person name="Glaser P."/>
            <person name="Goffeau A."/>
            <person name="Golightly E.J."/>
            <person name="Grandi G."/>
            <person name="Guiseppi G."/>
            <person name="Guy B.J."/>
            <person name="Haga K."/>
            <person name="Haiech J."/>
            <person name="Harwood C.R."/>
            <person name="Henaut A."/>
            <person name="Hilbert H."/>
            <person name="Holsappel S."/>
            <person name="Hosono S."/>
            <person name="Hullo M.-F."/>
            <person name="Itaya M."/>
            <person name="Jones L.-M."/>
            <person name="Joris B."/>
            <person name="Karamata D."/>
            <person name="Kasahara Y."/>
            <person name="Klaerr-Blanchard M."/>
            <person name="Klein C."/>
            <person name="Kobayashi Y."/>
            <person name="Koetter P."/>
            <person name="Koningstein G."/>
            <person name="Krogh S."/>
            <person name="Kumano M."/>
            <person name="Kurita K."/>
            <person name="Lapidus A."/>
            <person name="Lardinois S."/>
            <person name="Lauber J."/>
            <person name="Lazarevic V."/>
            <person name="Lee S.-M."/>
            <person name="Levine A."/>
            <person name="Liu H."/>
            <person name="Masuda S."/>
            <person name="Mauel C."/>
            <person name="Medigue C."/>
            <person name="Medina N."/>
            <person name="Mellado R.P."/>
            <person name="Mizuno M."/>
            <person name="Moestl D."/>
            <person name="Nakai S."/>
            <person name="Noback M."/>
            <person name="Noone D."/>
            <person name="O'Reilly M."/>
            <person name="Ogawa K."/>
            <person name="Ogiwara A."/>
            <person name="Oudega B."/>
            <person name="Park S.-H."/>
            <person name="Parro V."/>
            <person name="Pohl T.M."/>
            <person name="Portetelle D."/>
            <person name="Porwollik S."/>
            <person name="Prescott A.M."/>
            <person name="Presecan E."/>
            <person name="Pujic P."/>
            <person name="Purnelle B."/>
            <person name="Rapoport G."/>
            <person name="Rey M."/>
            <person name="Reynolds S."/>
            <person name="Rieger M."/>
            <person name="Rivolta C."/>
            <person name="Rocha E."/>
            <person name="Roche B."/>
            <person name="Rose M."/>
            <person name="Sadaie Y."/>
            <person name="Sato T."/>
            <person name="Scanlan E."/>
            <person name="Schleich S."/>
            <person name="Schroeter R."/>
            <person name="Scoffone F."/>
            <person name="Sekiguchi J."/>
            <person name="Sekowska A."/>
            <person name="Seror S.J."/>
            <person name="Serror P."/>
            <person name="Shin B.-S."/>
            <person name="Soldo B."/>
            <person name="Sorokin A."/>
            <person name="Tacconi E."/>
            <person name="Takagi T."/>
            <person name="Takahashi H."/>
            <person name="Takemaru K."/>
            <person name="Takeuchi M."/>
            <person name="Tamakoshi A."/>
            <person name="Tanaka T."/>
            <person name="Terpstra P."/>
            <person name="Tognoni A."/>
            <person name="Tosato V."/>
            <person name="Uchiyama S."/>
            <person name="Vandenbol M."/>
            <person name="Vannier F."/>
            <person name="Vassarotti A."/>
            <person name="Viari A."/>
            <person name="Wambutt R."/>
            <person name="Wedler E."/>
            <person name="Wedler H."/>
            <person name="Weitzenegger T."/>
            <person name="Winters P."/>
            <person name="Wipat A."/>
            <person name="Yamamoto H."/>
            <person name="Yamane K."/>
            <person name="Yasumoto K."/>
            <person name="Yata K."/>
            <person name="Yoshida K."/>
            <person name="Yoshikawa H.-F."/>
            <person name="Zumstein E."/>
            <person name="Yoshikawa H."/>
            <person name="Danchin A."/>
        </authorList>
    </citation>
    <scope>NUCLEOTIDE SEQUENCE [LARGE SCALE GENOMIC DNA]</scope>
    <source>
        <strain>168</strain>
    </source>
</reference>
<proteinExistence type="predicted"/>
<keyword id="KW-1003">Cell membrane</keyword>
<keyword id="KW-0472">Membrane</keyword>
<keyword id="KW-1185">Reference proteome</keyword>
<keyword id="KW-0812">Transmembrane</keyword>
<keyword id="KW-1133">Transmembrane helix</keyword>
<sequence length="62" mass="6732">MKKMNWLLLLFAFAAVFSIMLIGVFIAEKSPAGIIASIVLVCAVMGGGFTLKKKMREQGLLD</sequence>
<gene>
    <name type="primary">ylaF</name>
    <name type="ordered locus">BSU14760</name>
</gene>
<protein>
    <recommendedName>
        <fullName>Uncharacterized protein YlaF</fullName>
    </recommendedName>
</protein>
<organism>
    <name type="scientific">Bacillus subtilis (strain 168)</name>
    <dbReference type="NCBI Taxonomy" id="224308"/>
    <lineage>
        <taxon>Bacteria</taxon>
        <taxon>Bacillati</taxon>
        <taxon>Bacillota</taxon>
        <taxon>Bacilli</taxon>
        <taxon>Bacillales</taxon>
        <taxon>Bacillaceae</taxon>
        <taxon>Bacillus</taxon>
    </lineage>
</organism>
<evidence type="ECO:0000255" key="1"/>
<evidence type="ECO:0000305" key="2"/>
<dbReference type="EMBL" id="Z97025">
    <property type="protein sequence ID" value="CAB09711.1"/>
    <property type="molecule type" value="Genomic_DNA"/>
</dbReference>
<dbReference type="EMBL" id="AL009126">
    <property type="protein sequence ID" value="CAB13349.1"/>
    <property type="molecule type" value="Genomic_DNA"/>
</dbReference>
<dbReference type="PIR" id="D69872">
    <property type="entry name" value="D69872"/>
</dbReference>
<dbReference type="RefSeq" id="NP_389359.1">
    <property type="nucleotide sequence ID" value="NC_000964.3"/>
</dbReference>
<dbReference type="RefSeq" id="WP_003245500.1">
    <property type="nucleotide sequence ID" value="NZ_OZ025638.1"/>
</dbReference>
<dbReference type="SMR" id="O07630"/>
<dbReference type="FunCoup" id="O07630">
    <property type="interactions" value="5"/>
</dbReference>
<dbReference type="STRING" id="224308.BSU14760"/>
<dbReference type="PaxDb" id="224308-BSU14760"/>
<dbReference type="EnsemblBacteria" id="CAB13349">
    <property type="protein sequence ID" value="CAB13349"/>
    <property type="gene ID" value="BSU_14760"/>
</dbReference>
<dbReference type="GeneID" id="935954"/>
<dbReference type="KEGG" id="bsu:BSU14760"/>
<dbReference type="PATRIC" id="fig|224308.179.peg.1610"/>
<dbReference type="InParanoid" id="O07630"/>
<dbReference type="OrthoDB" id="2679959at2"/>
<dbReference type="BioCyc" id="BSUB:BSU14760-MONOMER"/>
<dbReference type="Proteomes" id="UP000001570">
    <property type="component" value="Chromosome"/>
</dbReference>
<dbReference type="GO" id="GO:0005886">
    <property type="term" value="C:plasma membrane"/>
    <property type="evidence" value="ECO:0007669"/>
    <property type="project" value="UniProtKB-SubCell"/>
</dbReference>
<dbReference type="InterPro" id="IPR035211">
    <property type="entry name" value="DUF5325"/>
</dbReference>
<dbReference type="Pfam" id="PF17259">
    <property type="entry name" value="DUF5325"/>
    <property type="match status" value="1"/>
</dbReference>